<protein>
    <recommendedName>
        <fullName evidence="1">Urease accessory protein UreE</fullName>
    </recommendedName>
</protein>
<feature type="chain" id="PRO_1000148714" description="Urease accessory protein UreE">
    <location>
        <begin position="1"/>
        <end position="161"/>
    </location>
</feature>
<proteinExistence type="inferred from homology"/>
<keyword id="KW-0143">Chaperone</keyword>
<keyword id="KW-0963">Cytoplasm</keyword>
<keyword id="KW-0533">Nickel</keyword>
<name>UREE_PSECP</name>
<sequence length="161" mass="17744">MIIDKVLGNLHDLPENDLAAYTGLHREKVVLPSAQLVKRIQRATTDHGNEIGIRLASGSGDLRDGDILHVADTNMIVVSVLPTDVLVIAPRTIHEMGVTAHSLGNRHLQAQFFDADSEYGAAVMVCAYDHTVEDYLTHAGVPYTRQERVLPVPFRHAEHSH</sequence>
<organism>
    <name type="scientific">Pseudarthrobacter chlorophenolicus (strain ATCC 700700 / DSM 12829 / CIP 107037 / JCM 12360 / KCTC 9906 / NCIMB 13794 / A6)</name>
    <name type="common">Arthrobacter chlorophenolicus</name>
    <dbReference type="NCBI Taxonomy" id="452863"/>
    <lineage>
        <taxon>Bacteria</taxon>
        <taxon>Bacillati</taxon>
        <taxon>Actinomycetota</taxon>
        <taxon>Actinomycetes</taxon>
        <taxon>Micrococcales</taxon>
        <taxon>Micrococcaceae</taxon>
        <taxon>Pseudarthrobacter</taxon>
    </lineage>
</organism>
<gene>
    <name evidence="1" type="primary">ureE</name>
    <name type="ordered locus">Achl_0393</name>
</gene>
<accession>B8HA08</accession>
<dbReference type="EMBL" id="CP001341">
    <property type="protein sequence ID" value="ACL38392.1"/>
    <property type="molecule type" value="Genomic_DNA"/>
</dbReference>
<dbReference type="RefSeq" id="WP_015935619.1">
    <property type="nucleotide sequence ID" value="NC_011886.1"/>
</dbReference>
<dbReference type="SMR" id="B8HA08"/>
<dbReference type="STRING" id="452863.Achl_0393"/>
<dbReference type="KEGG" id="ach:Achl_0393"/>
<dbReference type="eggNOG" id="COG2371">
    <property type="taxonomic scope" value="Bacteria"/>
</dbReference>
<dbReference type="HOGENOM" id="CLU_093757_3_1_11"/>
<dbReference type="OrthoDB" id="9810882at2"/>
<dbReference type="Proteomes" id="UP000002505">
    <property type="component" value="Chromosome"/>
</dbReference>
<dbReference type="GO" id="GO:0005737">
    <property type="term" value="C:cytoplasm"/>
    <property type="evidence" value="ECO:0007669"/>
    <property type="project" value="UniProtKB-SubCell"/>
</dbReference>
<dbReference type="GO" id="GO:0016151">
    <property type="term" value="F:nickel cation binding"/>
    <property type="evidence" value="ECO:0007669"/>
    <property type="project" value="UniProtKB-UniRule"/>
</dbReference>
<dbReference type="GO" id="GO:0051082">
    <property type="term" value="F:unfolded protein binding"/>
    <property type="evidence" value="ECO:0007669"/>
    <property type="project" value="UniProtKB-UniRule"/>
</dbReference>
<dbReference type="GO" id="GO:0006457">
    <property type="term" value="P:protein folding"/>
    <property type="evidence" value="ECO:0007669"/>
    <property type="project" value="InterPro"/>
</dbReference>
<dbReference type="CDD" id="cd00571">
    <property type="entry name" value="UreE"/>
    <property type="match status" value="1"/>
</dbReference>
<dbReference type="Gene3D" id="2.60.260.20">
    <property type="entry name" value="Urease metallochaperone UreE, N-terminal domain"/>
    <property type="match status" value="1"/>
</dbReference>
<dbReference type="Gene3D" id="3.30.70.790">
    <property type="entry name" value="UreE, C-terminal domain"/>
    <property type="match status" value="1"/>
</dbReference>
<dbReference type="HAMAP" id="MF_00822">
    <property type="entry name" value="UreE"/>
    <property type="match status" value="1"/>
</dbReference>
<dbReference type="InterPro" id="IPR012406">
    <property type="entry name" value="UreE"/>
</dbReference>
<dbReference type="InterPro" id="IPR004029">
    <property type="entry name" value="UreE_N"/>
</dbReference>
<dbReference type="InterPro" id="IPR036118">
    <property type="entry name" value="UreE_N_sf"/>
</dbReference>
<dbReference type="NCBIfam" id="NF009757">
    <property type="entry name" value="PRK13261.2-3"/>
    <property type="match status" value="1"/>
</dbReference>
<dbReference type="Pfam" id="PF02814">
    <property type="entry name" value="UreE_N"/>
    <property type="match status" value="1"/>
</dbReference>
<dbReference type="PIRSF" id="PIRSF036402">
    <property type="entry name" value="Ureas_acces_UreE"/>
    <property type="match status" value="1"/>
</dbReference>
<dbReference type="SMART" id="SM00988">
    <property type="entry name" value="UreE_N"/>
    <property type="match status" value="1"/>
</dbReference>
<dbReference type="SUPFAM" id="SSF69737">
    <property type="entry name" value="Urease metallochaperone UreE, C-terminal domain"/>
    <property type="match status" value="1"/>
</dbReference>
<dbReference type="SUPFAM" id="SSF69287">
    <property type="entry name" value="Urease metallochaperone UreE, N-terminal domain"/>
    <property type="match status" value="1"/>
</dbReference>
<evidence type="ECO:0000255" key="1">
    <source>
        <dbReference type="HAMAP-Rule" id="MF_00822"/>
    </source>
</evidence>
<comment type="function">
    <text evidence="1">Involved in urease metallocenter assembly. Binds nickel. Probably functions as a nickel donor during metallocenter assembly.</text>
</comment>
<comment type="subcellular location">
    <subcellularLocation>
        <location evidence="1">Cytoplasm</location>
    </subcellularLocation>
</comment>
<comment type="similarity">
    <text evidence="1">Belongs to the UreE family.</text>
</comment>
<reference key="1">
    <citation type="submission" date="2009-01" db="EMBL/GenBank/DDBJ databases">
        <title>Complete sequence of chromosome of Arthrobacter chlorophenolicus A6.</title>
        <authorList>
            <consortium name="US DOE Joint Genome Institute"/>
            <person name="Lucas S."/>
            <person name="Copeland A."/>
            <person name="Lapidus A."/>
            <person name="Glavina del Rio T."/>
            <person name="Tice H."/>
            <person name="Bruce D."/>
            <person name="Goodwin L."/>
            <person name="Pitluck S."/>
            <person name="Goltsman E."/>
            <person name="Clum A."/>
            <person name="Larimer F."/>
            <person name="Land M."/>
            <person name="Hauser L."/>
            <person name="Kyrpides N."/>
            <person name="Mikhailova N."/>
            <person name="Jansson J."/>
            <person name="Richardson P."/>
        </authorList>
    </citation>
    <scope>NUCLEOTIDE SEQUENCE [LARGE SCALE GENOMIC DNA]</scope>
    <source>
        <strain>ATCC 700700 / DSM 12829 / CIP 107037 / JCM 12360 / KCTC 9906 / NCIMB 13794 / A6</strain>
    </source>
</reference>